<feature type="chain" id="PRO_1000213929" description="Uracil phosphoribosyltransferase">
    <location>
        <begin position="1"/>
        <end position="208"/>
    </location>
</feature>
<feature type="binding site" evidence="1">
    <location>
        <position position="78"/>
    </location>
    <ligand>
        <name>5-phospho-alpha-D-ribose 1-diphosphate</name>
        <dbReference type="ChEBI" id="CHEBI:58017"/>
    </ligand>
</feature>
<feature type="binding site" evidence="1">
    <location>
        <position position="103"/>
    </location>
    <ligand>
        <name>5-phospho-alpha-D-ribose 1-diphosphate</name>
        <dbReference type="ChEBI" id="CHEBI:58017"/>
    </ligand>
</feature>
<feature type="binding site" evidence="1">
    <location>
        <begin position="130"/>
        <end position="138"/>
    </location>
    <ligand>
        <name>5-phospho-alpha-D-ribose 1-diphosphate</name>
        <dbReference type="ChEBI" id="CHEBI:58017"/>
    </ligand>
</feature>
<feature type="binding site" evidence="1">
    <location>
        <position position="193"/>
    </location>
    <ligand>
        <name>uracil</name>
        <dbReference type="ChEBI" id="CHEBI:17568"/>
    </ligand>
</feature>
<feature type="binding site" evidence="1">
    <location>
        <begin position="198"/>
        <end position="200"/>
    </location>
    <ligand>
        <name>uracil</name>
        <dbReference type="ChEBI" id="CHEBI:17568"/>
    </ligand>
</feature>
<feature type="binding site" evidence="1">
    <location>
        <position position="199"/>
    </location>
    <ligand>
        <name>5-phospho-alpha-D-ribose 1-diphosphate</name>
        <dbReference type="ChEBI" id="CHEBI:58017"/>
    </ligand>
</feature>
<name>UPP_ECOBW</name>
<evidence type="ECO:0000255" key="1">
    <source>
        <dbReference type="HAMAP-Rule" id="MF_01218"/>
    </source>
</evidence>
<gene>
    <name evidence="1" type="primary">upp</name>
    <name type="ordered locus">BWG_2262</name>
</gene>
<accession>C4ZX73</accession>
<sequence>MKIVEVKHPLVKHKLGLMREQDISTKRFRELASEVGSLLTYEATADLETEKVTIEGWNGPVEIDQIKGKKITVVPILRAGLGMMDGVLENVPSARISVVGMYRNEETLEPVPYFQKLVSNIDERMALIVDPMLATGGSVIATIDLLKKAGCSSIKVLVLVAAPEGIAALEKAHPDVELYTASIDQGLNEHGYIIPGLGDAGDKIFGTK</sequence>
<organism>
    <name type="scientific">Escherichia coli (strain K12 / MC4100 / BW2952)</name>
    <dbReference type="NCBI Taxonomy" id="595496"/>
    <lineage>
        <taxon>Bacteria</taxon>
        <taxon>Pseudomonadati</taxon>
        <taxon>Pseudomonadota</taxon>
        <taxon>Gammaproteobacteria</taxon>
        <taxon>Enterobacterales</taxon>
        <taxon>Enterobacteriaceae</taxon>
        <taxon>Escherichia</taxon>
    </lineage>
</organism>
<keyword id="KW-0021">Allosteric enzyme</keyword>
<keyword id="KW-0328">Glycosyltransferase</keyword>
<keyword id="KW-0342">GTP-binding</keyword>
<keyword id="KW-0460">Magnesium</keyword>
<keyword id="KW-0547">Nucleotide-binding</keyword>
<keyword id="KW-0808">Transferase</keyword>
<protein>
    <recommendedName>
        <fullName evidence="1">Uracil phosphoribosyltransferase</fullName>
        <ecNumber evidence="1">2.4.2.9</ecNumber>
    </recommendedName>
    <alternativeName>
        <fullName evidence="1">UMP pyrophosphorylase</fullName>
    </alternativeName>
    <alternativeName>
        <fullName evidence="1">UPRTase</fullName>
    </alternativeName>
</protein>
<dbReference type="EC" id="2.4.2.9" evidence="1"/>
<dbReference type="EMBL" id="CP001396">
    <property type="protein sequence ID" value="ACR65763.1"/>
    <property type="molecule type" value="Genomic_DNA"/>
</dbReference>
<dbReference type="RefSeq" id="WP_001295473.1">
    <property type="nucleotide sequence ID" value="NC_012759.1"/>
</dbReference>
<dbReference type="SMR" id="C4ZX73"/>
<dbReference type="GeneID" id="93774638"/>
<dbReference type="KEGG" id="ebw:BWG_2262"/>
<dbReference type="HOGENOM" id="CLU_067096_2_2_6"/>
<dbReference type="UniPathway" id="UPA00574">
    <property type="reaction ID" value="UER00636"/>
</dbReference>
<dbReference type="GO" id="GO:0005525">
    <property type="term" value="F:GTP binding"/>
    <property type="evidence" value="ECO:0007669"/>
    <property type="project" value="UniProtKB-KW"/>
</dbReference>
<dbReference type="GO" id="GO:0000287">
    <property type="term" value="F:magnesium ion binding"/>
    <property type="evidence" value="ECO:0007669"/>
    <property type="project" value="UniProtKB-UniRule"/>
</dbReference>
<dbReference type="GO" id="GO:0004845">
    <property type="term" value="F:uracil phosphoribosyltransferase activity"/>
    <property type="evidence" value="ECO:0007669"/>
    <property type="project" value="UniProtKB-UniRule"/>
</dbReference>
<dbReference type="GO" id="GO:0044206">
    <property type="term" value="P:UMP salvage"/>
    <property type="evidence" value="ECO:0007669"/>
    <property type="project" value="UniProtKB-UniRule"/>
</dbReference>
<dbReference type="GO" id="GO:0006223">
    <property type="term" value="P:uracil salvage"/>
    <property type="evidence" value="ECO:0007669"/>
    <property type="project" value="InterPro"/>
</dbReference>
<dbReference type="CDD" id="cd06223">
    <property type="entry name" value="PRTases_typeI"/>
    <property type="match status" value="1"/>
</dbReference>
<dbReference type="FunFam" id="3.40.50.2020:FF:000003">
    <property type="entry name" value="Uracil phosphoribosyltransferase"/>
    <property type="match status" value="1"/>
</dbReference>
<dbReference type="Gene3D" id="3.40.50.2020">
    <property type="match status" value="1"/>
</dbReference>
<dbReference type="HAMAP" id="MF_01218_B">
    <property type="entry name" value="Upp_B"/>
    <property type="match status" value="1"/>
</dbReference>
<dbReference type="InterPro" id="IPR000836">
    <property type="entry name" value="PRibTrfase_dom"/>
</dbReference>
<dbReference type="InterPro" id="IPR029057">
    <property type="entry name" value="PRTase-like"/>
</dbReference>
<dbReference type="InterPro" id="IPR034332">
    <property type="entry name" value="Upp_B"/>
</dbReference>
<dbReference type="InterPro" id="IPR050054">
    <property type="entry name" value="UPRTase/APRTase"/>
</dbReference>
<dbReference type="InterPro" id="IPR005765">
    <property type="entry name" value="Ura_phspho_trans"/>
</dbReference>
<dbReference type="NCBIfam" id="NF001097">
    <property type="entry name" value="PRK00129.1"/>
    <property type="match status" value="1"/>
</dbReference>
<dbReference type="NCBIfam" id="TIGR01091">
    <property type="entry name" value="upp"/>
    <property type="match status" value="1"/>
</dbReference>
<dbReference type="PANTHER" id="PTHR32315">
    <property type="entry name" value="ADENINE PHOSPHORIBOSYLTRANSFERASE"/>
    <property type="match status" value="1"/>
</dbReference>
<dbReference type="PANTHER" id="PTHR32315:SF4">
    <property type="entry name" value="URACIL PHOSPHORIBOSYLTRANSFERASE, CHLOROPLASTIC"/>
    <property type="match status" value="1"/>
</dbReference>
<dbReference type="Pfam" id="PF14681">
    <property type="entry name" value="UPRTase"/>
    <property type="match status" value="1"/>
</dbReference>
<dbReference type="SUPFAM" id="SSF53271">
    <property type="entry name" value="PRTase-like"/>
    <property type="match status" value="1"/>
</dbReference>
<reference key="1">
    <citation type="journal article" date="2009" name="J. Bacteriol.">
        <title>Genomic sequencing reveals regulatory mutations and recombinational events in the widely used MC4100 lineage of Escherichia coli K-12.</title>
        <authorList>
            <person name="Ferenci T."/>
            <person name="Zhou Z."/>
            <person name="Betteridge T."/>
            <person name="Ren Y."/>
            <person name="Liu Y."/>
            <person name="Feng L."/>
            <person name="Reeves P.R."/>
            <person name="Wang L."/>
        </authorList>
    </citation>
    <scope>NUCLEOTIDE SEQUENCE [LARGE SCALE GENOMIC DNA]</scope>
    <source>
        <strain>K12 / MC4100 / BW2952</strain>
    </source>
</reference>
<comment type="function">
    <text evidence="1">Catalyzes the conversion of uracil and 5-phospho-alpha-D-ribose 1-diphosphate (PRPP) to UMP and diphosphate.</text>
</comment>
<comment type="catalytic activity">
    <reaction evidence="1">
        <text>UMP + diphosphate = 5-phospho-alpha-D-ribose 1-diphosphate + uracil</text>
        <dbReference type="Rhea" id="RHEA:13017"/>
        <dbReference type="ChEBI" id="CHEBI:17568"/>
        <dbReference type="ChEBI" id="CHEBI:33019"/>
        <dbReference type="ChEBI" id="CHEBI:57865"/>
        <dbReference type="ChEBI" id="CHEBI:58017"/>
        <dbReference type="EC" id="2.4.2.9"/>
    </reaction>
</comment>
<comment type="cofactor">
    <cofactor evidence="1">
        <name>Mg(2+)</name>
        <dbReference type="ChEBI" id="CHEBI:18420"/>
    </cofactor>
    <text evidence="1">Binds 1 Mg(2+) ion per subunit. The magnesium is bound as Mg-PRPP.</text>
</comment>
<comment type="activity regulation">
    <text evidence="1">Allosterically activated by GTP.</text>
</comment>
<comment type="pathway">
    <text evidence="1">Pyrimidine metabolism; UMP biosynthesis via salvage pathway; UMP from uracil: step 1/1.</text>
</comment>
<comment type="similarity">
    <text evidence="1">Belongs to the UPRTase family.</text>
</comment>
<proteinExistence type="inferred from homology"/>